<reference key="1">
    <citation type="journal article" date="2007" name="PLoS Genet.">
        <title>Patterns and implications of gene gain and loss in the evolution of Prochlorococcus.</title>
        <authorList>
            <person name="Kettler G.C."/>
            <person name="Martiny A.C."/>
            <person name="Huang K."/>
            <person name="Zucker J."/>
            <person name="Coleman M.L."/>
            <person name="Rodrigue S."/>
            <person name="Chen F."/>
            <person name="Lapidus A."/>
            <person name="Ferriera S."/>
            <person name="Johnson J."/>
            <person name="Steglich C."/>
            <person name="Church G.M."/>
            <person name="Richardson P."/>
            <person name="Chisholm S.W."/>
        </authorList>
    </citation>
    <scope>NUCLEOTIDE SEQUENCE [LARGE SCALE GENOMIC DNA]</scope>
    <source>
        <strain>MIT 9515</strain>
    </source>
</reference>
<feature type="chain" id="PRO_0000308073" description="Large ribosomal subunit protein uL1">
    <location>
        <begin position="1"/>
        <end position="235"/>
    </location>
</feature>
<gene>
    <name evidence="1" type="primary">rplA</name>
    <name evidence="1" type="synonym">rpl1</name>
    <name type="ordered locus">P9515_02321</name>
</gene>
<sequence>MKKLSKRMTALSTKIEDRTYAPLEALAIIKENANAKFDETIEAHIRLGIDPKYTDQQLRTTVALPHGTGQSIKIAVITSGENVAKAKSAGADLFGEEDLVESINKGNMDFDLLIATPDMMPKVAKLGRVLGPRGLMPNPKAGTVTSDIASAIKEFKAGKLEFRADKAGIVHVRFGKASFTENALFENLKTLQESIDKNKPSGAKGKYWKTFYVTSTMGPSVQVDINALQDYQPES</sequence>
<protein>
    <recommendedName>
        <fullName evidence="1">Large ribosomal subunit protein uL1</fullName>
    </recommendedName>
    <alternativeName>
        <fullName evidence="2">50S ribosomal protein L1</fullName>
    </alternativeName>
</protein>
<organism>
    <name type="scientific">Prochlorococcus marinus (strain MIT 9515)</name>
    <dbReference type="NCBI Taxonomy" id="167542"/>
    <lineage>
        <taxon>Bacteria</taxon>
        <taxon>Bacillati</taxon>
        <taxon>Cyanobacteriota</taxon>
        <taxon>Cyanophyceae</taxon>
        <taxon>Synechococcales</taxon>
        <taxon>Prochlorococcaceae</taxon>
        <taxon>Prochlorococcus</taxon>
    </lineage>
</organism>
<comment type="function">
    <text evidence="1">Binds directly to 23S rRNA. The L1 stalk is quite mobile in the ribosome, and is involved in E site tRNA release.</text>
</comment>
<comment type="function">
    <text evidence="1">Protein L1 is also a translational repressor protein, it controls the translation of the L11 operon by binding to its mRNA.</text>
</comment>
<comment type="subunit">
    <text evidence="1">Part of the 50S ribosomal subunit.</text>
</comment>
<comment type="similarity">
    <text evidence="1">Belongs to the universal ribosomal protein uL1 family.</text>
</comment>
<evidence type="ECO:0000255" key="1">
    <source>
        <dbReference type="HAMAP-Rule" id="MF_01318"/>
    </source>
</evidence>
<evidence type="ECO:0000305" key="2"/>
<name>RL1_PROM5</name>
<dbReference type="EMBL" id="CP000552">
    <property type="protein sequence ID" value="ABM71441.1"/>
    <property type="molecule type" value="Genomic_DNA"/>
</dbReference>
<dbReference type="RefSeq" id="WP_011819555.1">
    <property type="nucleotide sequence ID" value="NC_008817.1"/>
</dbReference>
<dbReference type="SMR" id="A2BUI0"/>
<dbReference type="STRING" id="167542.P9515_02321"/>
<dbReference type="GeneID" id="60200763"/>
<dbReference type="KEGG" id="pmc:P9515_02321"/>
<dbReference type="eggNOG" id="COG0081">
    <property type="taxonomic scope" value="Bacteria"/>
</dbReference>
<dbReference type="HOGENOM" id="CLU_062853_0_0_3"/>
<dbReference type="OrthoDB" id="9803740at2"/>
<dbReference type="Proteomes" id="UP000001589">
    <property type="component" value="Chromosome"/>
</dbReference>
<dbReference type="GO" id="GO:0015934">
    <property type="term" value="C:large ribosomal subunit"/>
    <property type="evidence" value="ECO:0007669"/>
    <property type="project" value="InterPro"/>
</dbReference>
<dbReference type="GO" id="GO:0019843">
    <property type="term" value="F:rRNA binding"/>
    <property type="evidence" value="ECO:0007669"/>
    <property type="project" value="UniProtKB-UniRule"/>
</dbReference>
<dbReference type="GO" id="GO:0003735">
    <property type="term" value="F:structural constituent of ribosome"/>
    <property type="evidence" value="ECO:0007669"/>
    <property type="project" value="InterPro"/>
</dbReference>
<dbReference type="GO" id="GO:0000049">
    <property type="term" value="F:tRNA binding"/>
    <property type="evidence" value="ECO:0007669"/>
    <property type="project" value="UniProtKB-KW"/>
</dbReference>
<dbReference type="GO" id="GO:0006417">
    <property type="term" value="P:regulation of translation"/>
    <property type="evidence" value="ECO:0007669"/>
    <property type="project" value="UniProtKB-KW"/>
</dbReference>
<dbReference type="GO" id="GO:0006412">
    <property type="term" value="P:translation"/>
    <property type="evidence" value="ECO:0007669"/>
    <property type="project" value="UniProtKB-UniRule"/>
</dbReference>
<dbReference type="CDD" id="cd00403">
    <property type="entry name" value="Ribosomal_L1"/>
    <property type="match status" value="1"/>
</dbReference>
<dbReference type="FunFam" id="3.40.50.790:FF:000001">
    <property type="entry name" value="50S ribosomal protein L1"/>
    <property type="match status" value="1"/>
</dbReference>
<dbReference type="Gene3D" id="3.30.190.20">
    <property type="match status" value="1"/>
</dbReference>
<dbReference type="Gene3D" id="3.40.50.790">
    <property type="match status" value="1"/>
</dbReference>
<dbReference type="HAMAP" id="MF_01318_B">
    <property type="entry name" value="Ribosomal_uL1_B"/>
    <property type="match status" value="1"/>
</dbReference>
<dbReference type="InterPro" id="IPR005878">
    <property type="entry name" value="Ribosom_uL1_bac-type"/>
</dbReference>
<dbReference type="InterPro" id="IPR002143">
    <property type="entry name" value="Ribosomal_uL1"/>
</dbReference>
<dbReference type="InterPro" id="IPR023674">
    <property type="entry name" value="Ribosomal_uL1-like"/>
</dbReference>
<dbReference type="InterPro" id="IPR028364">
    <property type="entry name" value="Ribosomal_uL1/biogenesis"/>
</dbReference>
<dbReference type="InterPro" id="IPR016095">
    <property type="entry name" value="Ribosomal_uL1_3-a/b-sand"/>
</dbReference>
<dbReference type="InterPro" id="IPR023673">
    <property type="entry name" value="Ribosomal_uL1_CS"/>
</dbReference>
<dbReference type="NCBIfam" id="TIGR01169">
    <property type="entry name" value="rplA_bact"/>
    <property type="match status" value="1"/>
</dbReference>
<dbReference type="PANTHER" id="PTHR36427">
    <property type="entry name" value="54S RIBOSOMAL PROTEIN L1, MITOCHONDRIAL"/>
    <property type="match status" value="1"/>
</dbReference>
<dbReference type="PANTHER" id="PTHR36427:SF3">
    <property type="entry name" value="LARGE RIBOSOMAL SUBUNIT PROTEIN UL1M"/>
    <property type="match status" value="1"/>
</dbReference>
<dbReference type="Pfam" id="PF00687">
    <property type="entry name" value="Ribosomal_L1"/>
    <property type="match status" value="1"/>
</dbReference>
<dbReference type="PIRSF" id="PIRSF002155">
    <property type="entry name" value="Ribosomal_L1"/>
    <property type="match status" value="1"/>
</dbReference>
<dbReference type="SUPFAM" id="SSF56808">
    <property type="entry name" value="Ribosomal protein L1"/>
    <property type="match status" value="1"/>
</dbReference>
<dbReference type="PROSITE" id="PS01199">
    <property type="entry name" value="RIBOSOMAL_L1"/>
    <property type="match status" value="1"/>
</dbReference>
<proteinExistence type="inferred from homology"/>
<keyword id="KW-0678">Repressor</keyword>
<keyword id="KW-0687">Ribonucleoprotein</keyword>
<keyword id="KW-0689">Ribosomal protein</keyword>
<keyword id="KW-0694">RNA-binding</keyword>
<keyword id="KW-0699">rRNA-binding</keyword>
<keyword id="KW-0810">Translation regulation</keyword>
<keyword id="KW-0820">tRNA-binding</keyword>
<accession>A2BUI0</accession>